<organism>
    <name type="scientific">Rhizopus delemar (strain RA 99-880 / ATCC MYA-4621 / FGSC 9543 / NRRL 43880)</name>
    <name type="common">Mucormycosis agent</name>
    <name type="synonym">Rhizopus arrhizus var. delemar</name>
    <dbReference type="NCBI Taxonomy" id="246409"/>
    <lineage>
        <taxon>Eukaryota</taxon>
        <taxon>Fungi</taxon>
        <taxon>Fungi incertae sedis</taxon>
        <taxon>Mucoromycota</taxon>
        <taxon>Mucoromycotina</taxon>
        <taxon>Mucoromycetes</taxon>
        <taxon>Mucorales</taxon>
        <taxon>Mucorineae</taxon>
        <taxon>Rhizopodaceae</taxon>
        <taxon>Rhizopus</taxon>
    </lineage>
</organism>
<feature type="chain" id="PRO_0000244725" description="Peptidyl-prolyl isomerase cwc27">
    <location>
        <begin position="1"/>
        <end position="524"/>
    </location>
</feature>
<feature type="domain" description="PPIase cyclophilin-type" evidence="2">
    <location>
        <begin position="11"/>
        <end position="166"/>
    </location>
</feature>
<feature type="region of interest" description="Disordered" evidence="3">
    <location>
        <begin position="243"/>
        <end position="371"/>
    </location>
</feature>
<feature type="region of interest" description="Disordered" evidence="3">
    <location>
        <begin position="389"/>
        <end position="417"/>
    </location>
</feature>
<feature type="region of interest" description="Disordered" evidence="3">
    <location>
        <begin position="451"/>
        <end position="524"/>
    </location>
</feature>
<feature type="compositionally biased region" description="Basic and acidic residues" evidence="3">
    <location>
        <begin position="252"/>
        <end position="308"/>
    </location>
</feature>
<feature type="compositionally biased region" description="Basic and acidic residues" evidence="3">
    <location>
        <begin position="318"/>
        <end position="328"/>
    </location>
</feature>
<feature type="compositionally biased region" description="Polar residues" evidence="3">
    <location>
        <begin position="329"/>
        <end position="338"/>
    </location>
</feature>
<feature type="compositionally biased region" description="Basic and acidic residues" evidence="3">
    <location>
        <begin position="340"/>
        <end position="359"/>
    </location>
</feature>
<feature type="compositionally biased region" description="Basic and acidic residues" evidence="3">
    <location>
        <begin position="461"/>
        <end position="477"/>
    </location>
</feature>
<feature type="compositionally biased region" description="Basic and acidic residues" evidence="3">
    <location>
        <begin position="487"/>
        <end position="505"/>
    </location>
</feature>
<feature type="compositionally biased region" description="Basic residues" evidence="3">
    <location>
        <begin position="506"/>
        <end position="515"/>
    </location>
</feature>
<accession>P0C1J2</accession>
<accession>I1BUC8</accession>
<dbReference type="EC" id="5.2.1.8"/>
<dbReference type="EMBL" id="CH476734">
    <property type="protein sequence ID" value="EIE79808.1"/>
    <property type="molecule type" value="Genomic_DNA"/>
</dbReference>
<dbReference type="SMR" id="P0C1J2"/>
<dbReference type="FunCoup" id="P0C1J2">
    <property type="interactions" value="344"/>
</dbReference>
<dbReference type="STRING" id="246409.P0C1J2"/>
<dbReference type="VEuPathDB" id="FungiDB:RO3G_04513"/>
<dbReference type="eggNOG" id="KOG0885">
    <property type="taxonomic scope" value="Eukaryota"/>
</dbReference>
<dbReference type="InParanoid" id="P0C1J2"/>
<dbReference type="OMA" id="CKNFLQH"/>
<dbReference type="OrthoDB" id="77540at4827"/>
<dbReference type="Proteomes" id="UP000009138">
    <property type="component" value="Unassembled WGS sequence"/>
</dbReference>
<dbReference type="GO" id="GO:0071013">
    <property type="term" value="C:catalytic step 2 spliceosome"/>
    <property type="evidence" value="ECO:0007669"/>
    <property type="project" value="TreeGrafter"/>
</dbReference>
<dbReference type="GO" id="GO:0005737">
    <property type="term" value="C:cytoplasm"/>
    <property type="evidence" value="ECO:0007669"/>
    <property type="project" value="UniProtKB-SubCell"/>
</dbReference>
<dbReference type="GO" id="GO:0003755">
    <property type="term" value="F:peptidyl-prolyl cis-trans isomerase activity"/>
    <property type="evidence" value="ECO:0007669"/>
    <property type="project" value="UniProtKB-KW"/>
</dbReference>
<dbReference type="GO" id="GO:0006397">
    <property type="term" value="P:mRNA processing"/>
    <property type="evidence" value="ECO:0007669"/>
    <property type="project" value="UniProtKB-KW"/>
</dbReference>
<dbReference type="GO" id="GO:0006457">
    <property type="term" value="P:protein folding"/>
    <property type="evidence" value="ECO:0007669"/>
    <property type="project" value="InterPro"/>
</dbReference>
<dbReference type="GO" id="GO:0008380">
    <property type="term" value="P:RNA splicing"/>
    <property type="evidence" value="ECO:0007669"/>
    <property type="project" value="UniProtKB-KW"/>
</dbReference>
<dbReference type="CDD" id="cd01925">
    <property type="entry name" value="cyclophilin_CeCYP16-like"/>
    <property type="match status" value="1"/>
</dbReference>
<dbReference type="FunFam" id="2.40.100.10:FF:000007">
    <property type="entry name" value="Peptidyl-prolyl cis-trans isomerase CWC27 homolog"/>
    <property type="match status" value="1"/>
</dbReference>
<dbReference type="Gene3D" id="2.40.100.10">
    <property type="entry name" value="Cyclophilin-like"/>
    <property type="match status" value="1"/>
</dbReference>
<dbReference type="InterPro" id="IPR029000">
    <property type="entry name" value="Cyclophilin-like_dom_sf"/>
</dbReference>
<dbReference type="InterPro" id="IPR020892">
    <property type="entry name" value="Cyclophilin-type_PPIase_CS"/>
</dbReference>
<dbReference type="InterPro" id="IPR002130">
    <property type="entry name" value="Cyclophilin-type_PPIase_dom"/>
</dbReference>
<dbReference type="InterPro" id="IPR044666">
    <property type="entry name" value="Cyclophilin_A-like"/>
</dbReference>
<dbReference type="PANTHER" id="PTHR45625">
    <property type="entry name" value="PEPTIDYL-PROLYL CIS-TRANS ISOMERASE-RELATED"/>
    <property type="match status" value="1"/>
</dbReference>
<dbReference type="PANTHER" id="PTHR45625:SF6">
    <property type="entry name" value="SPLICEOSOME-ASSOCIATED PROTEIN CWC27 HOMOLOG"/>
    <property type="match status" value="1"/>
</dbReference>
<dbReference type="Pfam" id="PF00160">
    <property type="entry name" value="Pro_isomerase"/>
    <property type="match status" value="1"/>
</dbReference>
<dbReference type="PRINTS" id="PR00153">
    <property type="entry name" value="CSAPPISMRASE"/>
</dbReference>
<dbReference type="SUPFAM" id="SSF50891">
    <property type="entry name" value="Cyclophilin-like"/>
    <property type="match status" value="1"/>
</dbReference>
<dbReference type="PROSITE" id="PS00170">
    <property type="entry name" value="CSA_PPIASE_1"/>
    <property type="match status" value="1"/>
</dbReference>
<dbReference type="PROSITE" id="PS50072">
    <property type="entry name" value="CSA_PPIASE_2"/>
    <property type="match status" value="1"/>
</dbReference>
<proteinExistence type="inferred from homology"/>
<protein>
    <recommendedName>
        <fullName>Peptidyl-prolyl isomerase cwc27</fullName>
        <shortName>PPIase cwc27</shortName>
        <ecNumber>5.2.1.8</ecNumber>
    </recommendedName>
    <alternativeName>
        <fullName>Rotamase cwc27</fullName>
    </alternativeName>
</protein>
<comment type="function">
    <text evidence="1">PPIases accelerate the folding of proteins. It catalyzes the cis-trans isomerization of proline imidic peptide bonds in oligopeptides. Involved in pre-mRNA splicing (By similarity).</text>
</comment>
<comment type="catalytic activity">
    <reaction>
        <text>[protein]-peptidylproline (omega=180) = [protein]-peptidylproline (omega=0)</text>
        <dbReference type="Rhea" id="RHEA:16237"/>
        <dbReference type="Rhea" id="RHEA-COMP:10747"/>
        <dbReference type="Rhea" id="RHEA-COMP:10748"/>
        <dbReference type="ChEBI" id="CHEBI:83833"/>
        <dbReference type="ChEBI" id="CHEBI:83834"/>
        <dbReference type="EC" id="5.2.1.8"/>
    </reaction>
</comment>
<comment type="subunit">
    <text evidence="1">Associated with the spliceosome.</text>
</comment>
<comment type="subcellular location">
    <subcellularLocation>
        <location evidence="1">Cytoplasm</location>
    </subcellularLocation>
    <subcellularLocation>
        <location evidence="1">Nucleus</location>
    </subcellularLocation>
</comment>
<comment type="similarity">
    <text evidence="4">Belongs to the cyclophilin-type PPIase family. CWC27 subfamily.</text>
</comment>
<evidence type="ECO:0000250" key="1"/>
<evidence type="ECO:0000255" key="2">
    <source>
        <dbReference type="PROSITE-ProRule" id="PRU00156"/>
    </source>
</evidence>
<evidence type="ECO:0000256" key="3">
    <source>
        <dbReference type="SAM" id="MobiDB-lite"/>
    </source>
</evidence>
<evidence type="ECO:0000305" key="4"/>
<name>CWC27_RHIO9</name>
<gene>
    <name type="primary">cwc27</name>
    <name type="ORF">RO3G_04513</name>
</gene>
<reference key="1">
    <citation type="journal article" date="2009" name="PLoS Genet.">
        <title>Genomic analysis of the basal lineage fungus Rhizopus oryzae reveals a whole-genome duplication.</title>
        <authorList>
            <person name="Ma L.-J."/>
            <person name="Ibrahim A.S."/>
            <person name="Skory C."/>
            <person name="Grabherr M.G."/>
            <person name="Burger G."/>
            <person name="Butler M."/>
            <person name="Elias M."/>
            <person name="Idnurm A."/>
            <person name="Lang B.F."/>
            <person name="Sone T."/>
            <person name="Abe A."/>
            <person name="Calvo S.E."/>
            <person name="Corrochano L.M."/>
            <person name="Engels R."/>
            <person name="Fu J."/>
            <person name="Hansberg W."/>
            <person name="Kim J.-M."/>
            <person name="Kodira C.D."/>
            <person name="Koehrsen M.J."/>
            <person name="Liu B."/>
            <person name="Miranda-Saavedra D."/>
            <person name="O'Leary S."/>
            <person name="Ortiz-Castellanos L."/>
            <person name="Poulter R."/>
            <person name="Rodriguez-Romero J."/>
            <person name="Ruiz-Herrera J."/>
            <person name="Shen Y.-Q."/>
            <person name="Zeng Q."/>
            <person name="Galagan J."/>
            <person name="Birren B.W."/>
            <person name="Cuomo C.A."/>
            <person name="Wickes B.L."/>
        </authorList>
    </citation>
    <scope>NUCLEOTIDE SEQUENCE [LARGE SCALE GENOMIC DNA]</scope>
    <source>
        <strain>RA 99-880 / ATCC MYA-4621 / FGSC 9543 / NRRL 43880</strain>
    </source>
</reference>
<keyword id="KW-0963">Cytoplasm</keyword>
<keyword id="KW-0413">Isomerase</keyword>
<keyword id="KW-0507">mRNA processing</keyword>
<keyword id="KW-0508">mRNA splicing</keyword>
<keyword id="KW-0539">Nucleus</keyword>
<keyword id="KW-1185">Reference proteome</keyword>
<keyword id="KW-0697">Rotamase</keyword>
<keyword id="KW-0747">Spliceosome</keyword>
<sequence>MSNIYALEPHTNAKVILHTTSGDIEIELWGKEAPRATRNFIQLCLEGYYDNTIFHRIVPGFLVQGGDPTGTGQGGESVYEDGFPDEFHSRLRFNRRGLVGVANTGQNDNGSQFFITLDRADELTKRHTLFGRVAGDTLFNVMKMTELEIDENERPLYPPRIKRTEIVINPFDDILPRITEREKRQQKELEKKKMLEEAKKKKAPKKKQLNLLSFGEEAAELEPPSHTVEKTKMKSAYDFMETSAPTPTELIEELKKPVKEESTVISEKKDDAKQEEENKKAEEEERKRKKALEEERKRQKEEEKKKMQENTSESRASAIEKLKQDIRNLSKTSSNTSDELIPKKDKKRSLVELEREKYASQKRKKMKKGDDTDVFNKLMSFQKKLSTAKEDEDAAAAKRDQPPCEIHGIPGCESCRDTTQDAEEDVSDAGWISHKLIFEKDLKGKDLMKRRETVDDYVVIDPRDREAKAKQEEYERKKGIKSSSSSQRRDRMDHDDKRYRTEKRSRSDRHRRSRSRDRYDDRRR</sequence>